<feature type="transit peptide" description="Chloroplast" evidence="4">
    <location>
        <begin position="1"/>
        <end position="36"/>
    </location>
</feature>
<feature type="chain" id="PRO_0000455255" description="Linalool synthase Tps-5073L4, chloroplastic">
    <location>
        <begin position="37"/>
        <end position="604"/>
    </location>
</feature>
<feature type="short sequence motif" description="DDXXD motif" evidence="7">
    <location>
        <begin position="360"/>
        <end position="364"/>
    </location>
</feature>
<feature type="binding site" evidence="2">
    <location>
        <position position="323"/>
    </location>
    <ligand>
        <name>(2E)-geranyl diphosphate</name>
        <dbReference type="ChEBI" id="CHEBI:58057"/>
    </ligand>
</feature>
<feature type="binding site" evidence="2">
    <location>
        <position position="360"/>
    </location>
    <ligand>
        <name>(2E)-geranyl diphosphate</name>
        <dbReference type="ChEBI" id="CHEBI:58057"/>
    </ligand>
</feature>
<feature type="binding site" evidence="2">
    <location>
        <position position="360"/>
    </location>
    <ligand>
        <name>Mg(2+)</name>
        <dbReference type="ChEBI" id="CHEBI:18420"/>
        <label>1</label>
    </ligand>
</feature>
<feature type="binding site" evidence="2">
    <location>
        <position position="360"/>
    </location>
    <ligand>
        <name>Mg(2+)</name>
        <dbReference type="ChEBI" id="CHEBI:18420"/>
        <label>2</label>
    </ligand>
</feature>
<feature type="binding site" evidence="2">
    <location>
        <position position="364"/>
    </location>
    <ligand>
        <name>(2E)-geranyl diphosphate</name>
        <dbReference type="ChEBI" id="CHEBI:58057"/>
    </ligand>
</feature>
<feature type="binding site" evidence="2">
    <location>
        <position position="364"/>
    </location>
    <ligand>
        <name>Mg(2+)</name>
        <dbReference type="ChEBI" id="CHEBI:18420"/>
        <label>1</label>
    </ligand>
</feature>
<feature type="binding site" evidence="2">
    <location>
        <position position="364"/>
    </location>
    <ligand>
        <name>Mg(2+)</name>
        <dbReference type="ChEBI" id="CHEBI:18420"/>
        <label>2</label>
    </ligand>
</feature>
<feature type="binding site" evidence="2">
    <location>
        <position position="501"/>
    </location>
    <ligand>
        <name>(2E)-geranyl diphosphate</name>
        <dbReference type="ChEBI" id="CHEBI:58057"/>
    </ligand>
</feature>
<feature type="binding site" evidence="2">
    <location>
        <position position="504"/>
    </location>
    <ligand>
        <name>(2E)-geranyl diphosphate</name>
        <dbReference type="ChEBI" id="CHEBI:58057"/>
    </ligand>
</feature>
<feature type="binding site" evidence="2">
    <location>
        <position position="504"/>
    </location>
    <ligand>
        <name>Mg(2+)</name>
        <dbReference type="ChEBI" id="CHEBI:18420"/>
        <label>3</label>
    </ligand>
</feature>
<feature type="binding site" evidence="2">
    <location>
        <position position="508"/>
    </location>
    <ligand>
        <name>Mg(2+)</name>
        <dbReference type="ChEBI" id="CHEBI:18420"/>
        <label>3</label>
    </ligand>
</feature>
<feature type="binding site" evidence="2">
    <location>
        <position position="512"/>
    </location>
    <ligand>
        <name>Mg(2+)</name>
        <dbReference type="ChEBI" id="CHEBI:18420"/>
        <label>3</label>
    </ligand>
</feature>
<evidence type="ECO:0000250" key="1">
    <source>
        <dbReference type="UniProtKB" id="A0A1C9J6A7"/>
    </source>
</evidence>
<evidence type="ECO:0000250" key="2">
    <source>
        <dbReference type="UniProtKB" id="Q40577"/>
    </source>
</evidence>
<evidence type="ECO:0000250" key="3">
    <source>
        <dbReference type="UniProtKB" id="Q6JD73"/>
    </source>
</evidence>
<evidence type="ECO:0000255" key="4"/>
<evidence type="ECO:0000269" key="5">
    <source>
    </source>
</evidence>
<evidence type="ECO:0000303" key="6">
    <source>
    </source>
</evidence>
<evidence type="ECO:0000305" key="7"/>
<sequence length="604" mass="70389">MSSMRIYVAIMKKPSVKHVDYVDKKASKPSWRVSSSATAGLRASSSLQLDVKKPADEILTARRSGNYQPSLWDFNYLQSLNTTHYKEERHLKREAELIEQVKMLLDEEMGAVQKLDLVDDLKNLGLSYFFEDQIKQILTFIYNEHECFRSNVEAKERDLYFTALGFRLLRQHGFQVSQEVFDCFKNEEGSDFKASLGDDTKGLVQLYEASFLLREGEDTLELARQYATKFLQKKVDHELIDDDSNLLSWIRHSLEIPLHWRIQRLEARWFLDAYATRHDVNPIILELAKLDFNIIQATQQEELKDLSRWWNSTCLVEKLPFVRDRLVESYFWAIALFEPHQYGYHRKIAAKIITLITSLDDVYDIYGTLDELQLFTDAIQRWDTESISRLAYYMQLFYMVLYNFVSELAYDGLKEKGFITIPYLQRSWADLVEAYLKEAKWFYNGYTPSMEEYLNNAYISIGATPVISQVFFTLATSIDKPVIESLYEYHRILRLSGMLVRLPDDLGTSPFEMKRGDVPKTIELYMKERNATEIEAQEHVRFLIREAWREMNTATAAADCPFTDDLVAAAANLGRAAQFMYLDGDGNHSQLHQRIASLLFEPYA</sequence>
<accession>C0KWV5</accession>
<protein>
    <recommendedName>
        <fullName evidence="6">Linalool synthase Tps-5073L4, chloroplastic</fullName>
        <shortName evidence="6">PfTps-5073L</shortName>
        <ecNumber evidence="5">4.2.3.-</ecNumber>
    </recommendedName>
</protein>
<organism>
    <name type="scientific">Perilla frutescens</name>
    <name type="common">Beefsteak mint</name>
    <name type="synonym">Perilla ocymoides</name>
    <dbReference type="NCBI Taxonomy" id="48386"/>
    <lineage>
        <taxon>Eukaryota</taxon>
        <taxon>Viridiplantae</taxon>
        <taxon>Streptophyta</taxon>
        <taxon>Embryophyta</taxon>
        <taxon>Tracheophyta</taxon>
        <taxon>Spermatophyta</taxon>
        <taxon>Magnoliopsida</taxon>
        <taxon>eudicotyledons</taxon>
        <taxon>Gunneridae</taxon>
        <taxon>Pentapetalae</taxon>
        <taxon>asterids</taxon>
        <taxon>lamiids</taxon>
        <taxon>Lamiales</taxon>
        <taxon>Lamiaceae</taxon>
        <taxon>Nepetoideae</taxon>
        <taxon>Elsholtzieae</taxon>
        <taxon>Perilla</taxon>
    </lineage>
</organism>
<name>LNOL7_PERFR</name>
<reference key="1">
    <citation type="journal article" date="2010" name="Phytochemistry">
        <title>Geraniol and linalool synthases from wild species of perilla.</title>
        <authorList>
            <person name="Masumoto N."/>
            <person name="Korin M."/>
            <person name="Ito M."/>
        </authorList>
    </citation>
    <scope>NUCLEOTIDE SEQUENCE [MRNA]</scope>
    <scope>FUNCTION</scope>
    <scope>CATALYTIC ACTIVITY</scope>
    <scope>PATHWAY</scope>
    <scope>COFACTOR</scope>
    <source>
        <strain>cv. 5073</strain>
    </source>
</reference>
<dbReference type="EC" id="4.2.3.-" evidence="5"/>
<dbReference type="EMBL" id="FJ644546">
    <property type="protein sequence ID" value="ACN42011.1"/>
    <property type="molecule type" value="mRNA"/>
</dbReference>
<dbReference type="SMR" id="C0KWV5"/>
<dbReference type="BRENDA" id="4.2.3.25">
    <property type="organism ID" value="11839"/>
</dbReference>
<dbReference type="UniPathway" id="UPA00213"/>
<dbReference type="GO" id="GO:0009507">
    <property type="term" value="C:chloroplast"/>
    <property type="evidence" value="ECO:0007669"/>
    <property type="project" value="UniProtKB-SubCell"/>
</dbReference>
<dbReference type="GO" id="GO:0000287">
    <property type="term" value="F:magnesium ion binding"/>
    <property type="evidence" value="ECO:0007669"/>
    <property type="project" value="InterPro"/>
</dbReference>
<dbReference type="GO" id="GO:0010333">
    <property type="term" value="F:terpene synthase activity"/>
    <property type="evidence" value="ECO:0007669"/>
    <property type="project" value="InterPro"/>
</dbReference>
<dbReference type="GO" id="GO:0016102">
    <property type="term" value="P:diterpenoid biosynthetic process"/>
    <property type="evidence" value="ECO:0007669"/>
    <property type="project" value="InterPro"/>
</dbReference>
<dbReference type="GO" id="GO:0016099">
    <property type="term" value="P:monoterpenoid biosynthetic process"/>
    <property type="evidence" value="ECO:0000314"/>
    <property type="project" value="UniProtKB"/>
</dbReference>
<dbReference type="CDD" id="cd00684">
    <property type="entry name" value="Terpene_cyclase_plant_C1"/>
    <property type="match status" value="1"/>
</dbReference>
<dbReference type="FunFam" id="1.10.600.10:FF:000007">
    <property type="entry name" value="Isoprene synthase, chloroplastic"/>
    <property type="match status" value="1"/>
</dbReference>
<dbReference type="FunFam" id="1.50.10.130:FF:000001">
    <property type="entry name" value="Isoprene synthase, chloroplastic"/>
    <property type="match status" value="1"/>
</dbReference>
<dbReference type="Gene3D" id="1.10.600.10">
    <property type="entry name" value="Farnesyl Diphosphate Synthase"/>
    <property type="match status" value="1"/>
</dbReference>
<dbReference type="Gene3D" id="1.50.10.130">
    <property type="entry name" value="Terpene synthase, N-terminal domain"/>
    <property type="match status" value="1"/>
</dbReference>
<dbReference type="InterPro" id="IPR008949">
    <property type="entry name" value="Isoprenoid_synthase_dom_sf"/>
</dbReference>
<dbReference type="InterPro" id="IPR034741">
    <property type="entry name" value="Terpene_cyclase-like_1_C"/>
</dbReference>
<dbReference type="InterPro" id="IPR044814">
    <property type="entry name" value="Terpene_cyclase_plant_C1"/>
</dbReference>
<dbReference type="InterPro" id="IPR001906">
    <property type="entry name" value="Terpene_synth_N"/>
</dbReference>
<dbReference type="InterPro" id="IPR036965">
    <property type="entry name" value="Terpene_synth_N_sf"/>
</dbReference>
<dbReference type="InterPro" id="IPR050148">
    <property type="entry name" value="Terpene_synthase-like"/>
</dbReference>
<dbReference type="InterPro" id="IPR005630">
    <property type="entry name" value="Terpene_synthase_metal-bd"/>
</dbReference>
<dbReference type="InterPro" id="IPR008930">
    <property type="entry name" value="Terpenoid_cyclase/PrenylTrfase"/>
</dbReference>
<dbReference type="PANTHER" id="PTHR31225">
    <property type="entry name" value="OS04G0344100 PROTEIN-RELATED"/>
    <property type="match status" value="1"/>
</dbReference>
<dbReference type="PANTHER" id="PTHR31225:SF9">
    <property type="entry name" value="TERPENE SYNTHASE 10"/>
    <property type="match status" value="1"/>
</dbReference>
<dbReference type="Pfam" id="PF01397">
    <property type="entry name" value="Terpene_synth"/>
    <property type="match status" value="1"/>
</dbReference>
<dbReference type="Pfam" id="PF03936">
    <property type="entry name" value="Terpene_synth_C"/>
    <property type="match status" value="1"/>
</dbReference>
<dbReference type="SFLD" id="SFLDG01019">
    <property type="entry name" value="Terpene_Cyclase_Like_1_C_Termi"/>
    <property type="match status" value="1"/>
</dbReference>
<dbReference type="SFLD" id="SFLDG01604">
    <property type="entry name" value="Terpene_Cyclase_Like_1_C_Termi"/>
    <property type="match status" value="1"/>
</dbReference>
<dbReference type="SFLD" id="SFLDG01014">
    <property type="entry name" value="Terpene_Cyclase_Like_1_N-term"/>
    <property type="match status" value="1"/>
</dbReference>
<dbReference type="SUPFAM" id="SSF48239">
    <property type="entry name" value="Terpenoid cyclases/Protein prenyltransferases"/>
    <property type="match status" value="1"/>
</dbReference>
<dbReference type="SUPFAM" id="SSF48576">
    <property type="entry name" value="Terpenoid synthases"/>
    <property type="match status" value="1"/>
</dbReference>
<proteinExistence type="evidence at protein level"/>
<keyword id="KW-0150">Chloroplast</keyword>
<keyword id="KW-0456">Lyase</keyword>
<keyword id="KW-0460">Magnesium</keyword>
<keyword id="KW-0479">Metal-binding</keyword>
<keyword id="KW-0934">Plastid</keyword>
<keyword id="KW-0809">Transit peptide</keyword>
<comment type="function">
    <text evidence="5">Monoterpene synthase (mono-TPS) involved in the biosynthesis of monoterpenes natural products (PubMed:20447664). Catalyzes the conversion of (2E)-geranyl diphosphate (GPP) into linalool (PubMed:20447664).</text>
</comment>
<comment type="catalytic activity">
    <reaction evidence="5">
        <text>(2E)-geranyl diphosphate + H2O = linalool + diphosphate</text>
        <dbReference type="Rhea" id="RHEA:68708"/>
        <dbReference type="ChEBI" id="CHEBI:15377"/>
        <dbReference type="ChEBI" id="CHEBI:17580"/>
        <dbReference type="ChEBI" id="CHEBI:33019"/>
        <dbReference type="ChEBI" id="CHEBI:58057"/>
    </reaction>
    <physiologicalReaction direction="left-to-right" evidence="5">
        <dbReference type="Rhea" id="RHEA:68709"/>
    </physiologicalReaction>
</comment>
<comment type="cofactor">
    <cofactor evidence="5">
        <name>Mg(2+)</name>
        <dbReference type="ChEBI" id="CHEBI:18420"/>
    </cofactor>
    <cofactor evidence="5">
        <name>Mn(2+)</name>
        <dbReference type="ChEBI" id="CHEBI:29035"/>
    </cofactor>
    <text evidence="1">Binds 3 Mg(2+) or Mn(2+) ions per subunit.</text>
</comment>
<comment type="pathway">
    <text evidence="5">Secondary metabolite biosynthesis; terpenoid biosynthesis.</text>
</comment>
<comment type="subunit">
    <text evidence="3">Monomer.</text>
</comment>
<comment type="subcellular location">
    <subcellularLocation>
        <location evidence="4">Plastid</location>
        <location evidence="4">Chloroplast</location>
    </subcellularLocation>
</comment>
<comment type="domain">
    <text evidence="7">The Asp-Asp-Xaa-Xaa-Asp/Glu (DDXXD/E) motif is important for the catalytic activity, presumably through binding to Mg(2+).</text>
</comment>
<comment type="similarity">
    <text evidence="7">Belongs to the terpene synthase family. Tpsb subfamily.</text>
</comment>
<gene>
    <name evidence="6" type="primary">Tps-5073L4</name>
</gene>